<protein>
    <recommendedName>
        <fullName evidence="2">Small ribosomal subunit protein uS15</fullName>
    </recommendedName>
    <alternativeName>
        <fullName>40S ribosomal protein S13</fullName>
    </alternativeName>
    <alternativeName>
        <fullName>S15</fullName>
    </alternativeName>
</protein>
<accession>P33192</accession>
<organism>
    <name type="scientific">Candida maltosa</name>
    <name type="common">Yeast</name>
    <dbReference type="NCBI Taxonomy" id="5479"/>
    <lineage>
        <taxon>Eukaryota</taxon>
        <taxon>Fungi</taxon>
        <taxon>Dikarya</taxon>
        <taxon>Ascomycota</taxon>
        <taxon>Saccharomycotina</taxon>
        <taxon>Pichiomycetes</taxon>
        <taxon>Debaryomycetaceae</taxon>
        <taxon>Candida/Lodderomyces clade</taxon>
        <taxon>Candida</taxon>
    </lineage>
</organism>
<feature type="initiator methionine" description="Removed" evidence="1">
    <location>
        <position position="1"/>
    </location>
</feature>
<feature type="chain" id="PRO_0000115686" description="Small ribosomal subunit protein uS15">
    <location>
        <begin position="2"/>
        <end position="151"/>
    </location>
</feature>
<sequence>MGRMHSAGKGISSSAIPYSRNAPSWFKLSSDEVVEQVIKYARKGLTPSQIGVILRDAHGVSQAKIVTGNKVLRILKSNGLAPELPEDLYFLIKKAVAVRKHLERNRKDKDSKFRLILIESRIHRLARYYRTVSVLPPNWKYESATASALVA</sequence>
<keyword id="KW-0687">Ribonucleoprotein</keyword>
<keyword id="KW-0689">Ribosomal protein</keyword>
<name>RS13_CANMA</name>
<reference key="1">
    <citation type="journal article" date="1992" name="Yeast">
        <title>Molecular cloning and analysis of autonomous replicating sequence of Candida maltosa.</title>
        <authorList>
            <person name="Sasnauskas K."/>
            <person name="Jomantiene R."/>
            <person name="Lebediene E."/>
            <person name="Lebedys J."/>
            <person name="Januska A."/>
            <person name="Janulaitis A."/>
        </authorList>
    </citation>
    <scope>NUCLEOTIDE SEQUENCE [GENOMIC DNA]</scope>
    <source>
        <strain>899</strain>
    </source>
</reference>
<proteinExistence type="inferred from homology"/>
<gene>
    <name type="primary">RPS13</name>
</gene>
<comment type="similarity">
    <text evidence="2">Belongs to the universal ribosomal protein uS15 family.</text>
</comment>
<evidence type="ECO:0000250" key="1"/>
<evidence type="ECO:0000305" key="2"/>
<dbReference type="EMBL" id="M58330">
    <property type="status" value="NOT_ANNOTATED_CDS"/>
    <property type="molecule type" value="Genomic_DNA"/>
</dbReference>
<dbReference type="PIR" id="S25374">
    <property type="entry name" value="S25374"/>
</dbReference>
<dbReference type="SMR" id="P33192"/>
<dbReference type="OMA" id="MHTRRKG"/>
<dbReference type="GO" id="GO:0022627">
    <property type="term" value="C:cytosolic small ribosomal subunit"/>
    <property type="evidence" value="ECO:0007669"/>
    <property type="project" value="TreeGrafter"/>
</dbReference>
<dbReference type="GO" id="GO:0005730">
    <property type="term" value="C:nucleolus"/>
    <property type="evidence" value="ECO:0007669"/>
    <property type="project" value="TreeGrafter"/>
</dbReference>
<dbReference type="GO" id="GO:0070181">
    <property type="term" value="F:small ribosomal subunit rRNA binding"/>
    <property type="evidence" value="ECO:0007669"/>
    <property type="project" value="TreeGrafter"/>
</dbReference>
<dbReference type="GO" id="GO:0003735">
    <property type="term" value="F:structural constituent of ribosome"/>
    <property type="evidence" value="ECO:0007669"/>
    <property type="project" value="InterPro"/>
</dbReference>
<dbReference type="GO" id="GO:0006412">
    <property type="term" value="P:translation"/>
    <property type="evidence" value="ECO:0007669"/>
    <property type="project" value="InterPro"/>
</dbReference>
<dbReference type="CDD" id="cd00353">
    <property type="entry name" value="Ribosomal_S15p_S13e"/>
    <property type="match status" value="1"/>
</dbReference>
<dbReference type="FunFam" id="1.10.287.10:FF:000003">
    <property type="entry name" value="40S ribosomal protein S13"/>
    <property type="match status" value="1"/>
</dbReference>
<dbReference type="FunFam" id="4.10.860.130:FF:000001">
    <property type="entry name" value="40S ribosomal protein S13"/>
    <property type="match status" value="1"/>
</dbReference>
<dbReference type="Gene3D" id="4.10.860.130">
    <property type="match status" value="1"/>
</dbReference>
<dbReference type="Gene3D" id="1.10.287.10">
    <property type="entry name" value="S15/NS1, RNA-binding"/>
    <property type="match status" value="1"/>
</dbReference>
<dbReference type="HAMAP" id="MF_01343_A">
    <property type="entry name" value="Ribosomal_uS15_A"/>
    <property type="match status" value="1"/>
</dbReference>
<dbReference type="InterPro" id="IPR000589">
    <property type="entry name" value="Ribosomal_uS15"/>
</dbReference>
<dbReference type="InterPro" id="IPR023029">
    <property type="entry name" value="Ribosomal_uS15_arc_euk"/>
</dbReference>
<dbReference type="InterPro" id="IPR012606">
    <property type="entry name" value="Ribosomal_uS15_N"/>
</dbReference>
<dbReference type="InterPro" id="IPR009068">
    <property type="entry name" value="uS15_NS1_RNA-bd_sf"/>
</dbReference>
<dbReference type="NCBIfam" id="NF006331">
    <property type="entry name" value="PRK08561.1"/>
    <property type="match status" value="1"/>
</dbReference>
<dbReference type="PANTHER" id="PTHR11885">
    <property type="entry name" value="RIBOSOMAL PROTEIN S15P/S13E"/>
    <property type="match status" value="1"/>
</dbReference>
<dbReference type="PANTHER" id="PTHR11885:SF6">
    <property type="entry name" value="SMALL RIBOSOMAL SUBUNIT PROTEIN US15"/>
    <property type="match status" value="1"/>
</dbReference>
<dbReference type="Pfam" id="PF08069">
    <property type="entry name" value="Ribosomal_S13_N"/>
    <property type="match status" value="1"/>
</dbReference>
<dbReference type="Pfam" id="PF00312">
    <property type="entry name" value="Ribosomal_S15"/>
    <property type="match status" value="1"/>
</dbReference>
<dbReference type="SMART" id="SM01386">
    <property type="entry name" value="Ribosomal_S13_N"/>
    <property type="match status" value="1"/>
</dbReference>
<dbReference type="SMART" id="SM01387">
    <property type="entry name" value="Ribosomal_S15"/>
    <property type="match status" value="1"/>
</dbReference>
<dbReference type="SUPFAM" id="SSF47060">
    <property type="entry name" value="S15/NS1 RNA-binding domain"/>
    <property type="match status" value="1"/>
</dbReference>
<dbReference type="PROSITE" id="PS00362">
    <property type="entry name" value="RIBOSOMAL_S15"/>
    <property type="match status" value="1"/>
</dbReference>